<protein>
    <recommendedName>
        <fullName>Histone H2B</fullName>
    </recommendedName>
</protein>
<dbReference type="EMBL" id="DS027690">
    <property type="protein sequence ID" value="EAW22013.1"/>
    <property type="molecule type" value="Genomic_DNA"/>
</dbReference>
<dbReference type="RefSeq" id="XP_001263910.1">
    <property type="nucleotide sequence ID" value="XM_001263909.1"/>
</dbReference>
<dbReference type="SMR" id="A1D8G9"/>
<dbReference type="STRING" id="331117.A1D8G9"/>
<dbReference type="EnsemblFungi" id="EAW22013">
    <property type="protein sequence ID" value="EAW22013"/>
    <property type="gene ID" value="NFIA_071840"/>
</dbReference>
<dbReference type="GeneID" id="4590556"/>
<dbReference type="KEGG" id="nfi:NFIA_071840"/>
<dbReference type="VEuPathDB" id="FungiDB:NFIA_071840"/>
<dbReference type="eggNOG" id="KOG1744">
    <property type="taxonomic scope" value="Eukaryota"/>
</dbReference>
<dbReference type="HOGENOM" id="CLU_075666_1_3_1"/>
<dbReference type="OMA" id="FCPFAIR"/>
<dbReference type="OrthoDB" id="10254238at2759"/>
<dbReference type="Proteomes" id="UP000006702">
    <property type="component" value="Unassembled WGS sequence"/>
</dbReference>
<dbReference type="GO" id="GO:0000786">
    <property type="term" value="C:nucleosome"/>
    <property type="evidence" value="ECO:0007669"/>
    <property type="project" value="UniProtKB-KW"/>
</dbReference>
<dbReference type="GO" id="GO:0005634">
    <property type="term" value="C:nucleus"/>
    <property type="evidence" value="ECO:0007669"/>
    <property type="project" value="UniProtKB-SubCell"/>
</dbReference>
<dbReference type="GO" id="GO:0003677">
    <property type="term" value="F:DNA binding"/>
    <property type="evidence" value="ECO:0007669"/>
    <property type="project" value="UniProtKB-KW"/>
</dbReference>
<dbReference type="GO" id="GO:0046982">
    <property type="term" value="F:protein heterodimerization activity"/>
    <property type="evidence" value="ECO:0007669"/>
    <property type="project" value="InterPro"/>
</dbReference>
<dbReference type="GO" id="GO:0030527">
    <property type="term" value="F:structural constituent of chromatin"/>
    <property type="evidence" value="ECO:0007669"/>
    <property type="project" value="InterPro"/>
</dbReference>
<dbReference type="CDD" id="cd22910">
    <property type="entry name" value="HFD_H2B"/>
    <property type="match status" value="1"/>
</dbReference>
<dbReference type="FunFam" id="1.10.20.10:FF:000014">
    <property type="entry name" value="Histone H2B"/>
    <property type="match status" value="1"/>
</dbReference>
<dbReference type="Gene3D" id="1.10.20.10">
    <property type="entry name" value="Histone, subunit A"/>
    <property type="match status" value="1"/>
</dbReference>
<dbReference type="InterPro" id="IPR009072">
    <property type="entry name" value="Histone-fold"/>
</dbReference>
<dbReference type="InterPro" id="IPR007125">
    <property type="entry name" value="Histone_H2A/H2B/H3"/>
</dbReference>
<dbReference type="InterPro" id="IPR000558">
    <property type="entry name" value="Histone_H2B"/>
</dbReference>
<dbReference type="InterPro" id="IPR055333">
    <property type="entry name" value="HISTONE_H2B_site"/>
</dbReference>
<dbReference type="PANTHER" id="PTHR23428">
    <property type="entry name" value="HISTONE H2B"/>
    <property type="match status" value="1"/>
</dbReference>
<dbReference type="Pfam" id="PF00125">
    <property type="entry name" value="Histone"/>
    <property type="match status" value="1"/>
</dbReference>
<dbReference type="PRINTS" id="PR00621">
    <property type="entry name" value="HISTONEH2B"/>
</dbReference>
<dbReference type="SMART" id="SM00427">
    <property type="entry name" value="H2B"/>
    <property type="match status" value="1"/>
</dbReference>
<dbReference type="SUPFAM" id="SSF47113">
    <property type="entry name" value="Histone-fold"/>
    <property type="match status" value="1"/>
</dbReference>
<dbReference type="PROSITE" id="PS00357">
    <property type="entry name" value="HISTONE_H2B"/>
    <property type="match status" value="1"/>
</dbReference>
<gene>
    <name type="primary">htb1</name>
    <name type="ORF">NFIA_071840</name>
</gene>
<name>H2B_NEOFI</name>
<evidence type="ECO:0000250" key="1"/>
<evidence type="ECO:0000256" key="2">
    <source>
        <dbReference type="SAM" id="MobiDB-lite"/>
    </source>
</evidence>
<evidence type="ECO:0000305" key="3"/>
<proteinExistence type="inferred from homology"/>
<sequence length="140" mass="14955">MPPKAAEKKPSTGGKAPAGKAPAEKKEAGKKTAAAATGDKKKRGKTRKETYSSYIYKVLKQVHPDTGISTRAMSILNSFVNDIFERVATEASKLAAYNKKSTISSREIQTSVRLILPGELAKHAVSEGTKAVTKYSSSAK</sequence>
<organism>
    <name type="scientific">Neosartorya fischeri (strain ATCC 1020 / DSM 3700 / CBS 544.65 / FGSC A1164 / JCM 1740 / NRRL 181 / WB 181)</name>
    <name type="common">Aspergillus fischerianus</name>
    <dbReference type="NCBI Taxonomy" id="331117"/>
    <lineage>
        <taxon>Eukaryota</taxon>
        <taxon>Fungi</taxon>
        <taxon>Dikarya</taxon>
        <taxon>Ascomycota</taxon>
        <taxon>Pezizomycotina</taxon>
        <taxon>Eurotiomycetes</taxon>
        <taxon>Eurotiomycetidae</taxon>
        <taxon>Eurotiales</taxon>
        <taxon>Aspergillaceae</taxon>
        <taxon>Aspergillus</taxon>
        <taxon>Aspergillus subgen. Fumigati</taxon>
    </lineage>
</organism>
<accession>A1D8G9</accession>
<feature type="initiator methionine" description="Removed" evidence="1">
    <location>
        <position position="1"/>
    </location>
</feature>
<feature type="chain" id="PRO_0000297850" description="Histone H2B">
    <location>
        <begin position="2"/>
        <end position="140"/>
    </location>
</feature>
<feature type="region of interest" description="Disordered" evidence="2">
    <location>
        <begin position="1"/>
        <end position="48"/>
    </location>
</feature>
<feature type="compositionally biased region" description="Basic and acidic residues" evidence="2">
    <location>
        <begin position="1"/>
        <end position="10"/>
    </location>
</feature>
<feature type="compositionally biased region" description="Low complexity" evidence="2">
    <location>
        <begin position="11"/>
        <end position="21"/>
    </location>
</feature>
<feature type="modified residue" description="N6-acetyllysine; alternate" evidence="1">
    <location>
        <position position="8"/>
    </location>
</feature>
<feature type="modified residue" description="N6-acetyllysine; alternate" evidence="1">
    <location>
        <position position="9"/>
    </location>
</feature>
<feature type="modified residue" description="N6-acetyllysine" evidence="1">
    <location>
        <position position="15"/>
    </location>
</feature>
<feature type="modified residue" description="N6-acetyllysine; alternate" evidence="1">
    <location>
        <position position="25"/>
    </location>
</feature>
<feature type="cross-link" description="Glycyl lysine isopeptide (Lys-Gly) (interchain with G-Cter in SUMO); alternate" evidence="1">
    <location>
        <position position="8"/>
    </location>
</feature>
<feature type="cross-link" description="Glycyl lysine isopeptide (Lys-Gly) (interchain with G-Cter in SUMO); alternate" evidence="1">
    <location>
        <position position="9"/>
    </location>
</feature>
<feature type="cross-link" description="Glycyl lysine isopeptide (Lys-Gly) (interchain with G-Cter in SUMO); alternate" evidence="1">
    <location>
        <position position="25"/>
    </location>
</feature>
<feature type="cross-link" description="Glycyl lysine isopeptide (Lys-Gly) (interchain with G-Cter in SUMO)" evidence="1">
    <location>
        <position position="26"/>
    </location>
</feature>
<feature type="cross-link" description="Glycyl lysine isopeptide (Lys-Gly) (interchain with G-Cter in ubiquitin)" evidence="1">
    <location>
        <position position="134"/>
    </location>
</feature>
<keyword id="KW-0007">Acetylation</keyword>
<keyword id="KW-0158">Chromosome</keyword>
<keyword id="KW-0238">DNA-binding</keyword>
<keyword id="KW-1017">Isopeptide bond</keyword>
<keyword id="KW-0544">Nucleosome core</keyword>
<keyword id="KW-0539">Nucleus</keyword>
<keyword id="KW-1185">Reference proteome</keyword>
<keyword id="KW-0832">Ubl conjugation</keyword>
<reference key="1">
    <citation type="journal article" date="2008" name="PLoS Genet.">
        <title>Genomic islands in the pathogenic filamentous fungus Aspergillus fumigatus.</title>
        <authorList>
            <person name="Fedorova N.D."/>
            <person name="Khaldi N."/>
            <person name="Joardar V.S."/>
            <person name="Maiti R."/>
            <person name="Amedeo P."/>
            <person name="Anderson M.J."/>
            <person name="Crabtree J."/>
            <person name="Silva J.C."/>
            <person name="Badger J.H."/>
            <person name="Albarraq A."/>
            <person name="Angiuoli S."/>
            <person name="Bussey H."/>
            <person name="Bowyer P."/>
            <person name="Cotty P.J."/>
            <person name="Dyer P.S."/>
            <person name="Egan A."/>
            <person name="Galens K."/>
            <person name="Fraser-Liggett C.M."/>
            <person name="Haas B.J."/>
            <person name="Inman J.M."/>
            <person name="Kent R."/>
            <person name="Lemieux S."/>
            <person name="Malavazi I."/>
            <person name="Orvis J."/>
            <person name="Roemer T."/>
            <person name="Ronning C.M."/>
            <person name="Sundaram J.P."/>
            <person name="Sutton G."/>
            <person name="Turner G."/>
            <person name="Venter J.C."/>
            <person name="White O.R."/>
            <person name="Whitty B.R."/>
            <person name="Youngman P."/>
            <person name="Wolfe K.H."/>
            <person name="Goldman G.H."/>
            <person name="Wortman J.R."/>
            <person name="Jiang B."/>
            <person name="Denning D.W."/>
            <person name="Nierman W.C."/>
        </authorList>
    </citation>
    <scope>NUCLEOTIDE SEQUENCE [LARGE SCALE GENOMIC DNA]</scope>
    <source>
        <strain>ATCC 1020 / DSM 3700 / CBS 544.65 / FGSC A1164 / JCM 1740 / NRRL 181 / WB 181</strain>
    </source>
</reference>
<comment type="function">
    <text>Core component of nucleosome. Nucleosomes wrap and compact DNA into chromatin, limiting DNA accessibility to the cellular machineries which require DNA as a template. Histones thereby play a central role in transcription regulation, DNA repair, DNA replication and chromosomal stability. DNA accessibility is regulated via a complex set of post-translational modifications of histones, also called histone code, and nucleosome remodeling.</text>
</comment>
<comment type="subunit">
    <text>The nucleosome is a histone octamer containing two molecules each of H2A, H2B, H3 and H4 assembled in one H3-H4 heterotetramer and two H2A-H2B heterodimers. The octamer wraps approximately 147 bp of DNA.</text>
</comment>
<comment type="subcellular location">
    <subcellularLocation>
        <location evidence="1">Nucleus</location>
    </subcellularLocation>
    <subcellularLocation>
        <location evidence="1">Chromosome</location>
    </subcellularLocation>
</comment>
<comment type="PTM">
    <text evidence="1">Monoubiquitinated by the ubc2-bre1 complex to form H2BK123ub1. H2BK123ub1 gives a specific tag for epigenetic transcriptional activation and is also prerequisite for H3K4me and H3K79me formation. H2BK123ub1 also modulates the formation of double-strand breaks during meiosis and is a prerequisite for DNA-damage checkpoint activation (By similarity).</text>
</comment>
<comment type="PTM">
    <text evidence="1">Acetylated by gcn5 to form H2BK11ac and H2BK16ac. H2BK16ac can also be formed by esa1. Acetylation of N-terminal lysines and particularly formation of H2BK11acK16ac has a positive effect on transcription (By similarity).</text>
</comment>
<comment type="PTM">
    <text evidence="1">Sumoylation to form H2BK6su or H2BK7su, and probably also H2BK16su or H2BK17su, occurs preferentially near the telomeres and represses gene transcription.</text>
</comment>
<comment type="similarity">
    <text evidence="3">Belongs to the histone H2B family.</text>
</comment>
<comment type="caution">
    <text evidence="3">To ensure consistency between histone entries, we follow the 'Brno' nomenclature for histone modifications, with positions referring to those used in the literature for the 'closest' model organism. Due to slight variations in histone sequences between organisms and to the presence of initiator methionine in UniProtKB/Swiss-Prot sequences, the actual positions of modified amino acids in the sequence generally differ. In this entry the following conventions are used: H2BK6ac = acetylated Lys-8; H2BK6su = sumoylated Lys-8; H2BK7ac = acetylated Lys-9; H2BK7su = sumoylated Lys-9; H2BK11ac = acetylated Lys-15; H2BK16ac = acetylated Lys-25; H2BK16su = sumoylated Lys-25; H2BK17su = sumoylated Lys-26; H2BK123ub1 = monoubiquitinated Lys-134.</text>
</comment>